<gene>
    <name evidence="1" type="primary">panD</name>
    <name type="ordered locus">Smal_1520</name>
</gene>
<name>PAND_STRM5</name>
<feature type="chain" id="PRO_1000192043" description="Aspartate 1-decarboxylase beta chain" evidence="1">
    <location>
        <begin position="1"/>
        <end position="24"/>
    </location>
</feature>
<feature type="chain" id="PRO_1000192044" description="Aspartate 1-decarboxylase alpha chain" evidence="1">
    <location>
        <begin position="25"/>
        <end position="126"/>
    </location>
</feature>
<feature type="active site" description="Schiff-base intermediate with substrate; via pyruvic acid" evidence="1">
    <location>
        <position position="25"/>
    </location>
</feature>
<feature type="active site" description="Proton donor" evidence="1">
    <location>
        <position position="58"/>
    </location>
</feature>
<feature type="binding site" evidence="1">
    <location>
        <position position="57"/>
    </location>
    <ligand>
        <name>substrate</name>
    </ligand>
</feature>
<feature type="binding site" evidence="1">
    <location>
        <begin position="73"/>
        <end position="75"/>
    </location>
    <ligand>
        <name>substrate</name>
    </ligand>
</feature>
<feature type="modified residue" description="Pyruvic acid (Ser)" evidence="1">
    <location>
        <position position="25"/>
    </location>
</feature>
<evidence type="ECO:0000255" key="1">
    <source>
        <dbReference type="HAMAP-Rule" id="MF_00446"/>
    </source>
</evidence>
<proteinExistence type="inferred from homology"/>
<sequence>MHLSLLKTKIHRATVTHSELNYEGSIAIDDNLLAATGIREFEQVHIWDVTNGARFSTYAIRAEAGSGVVSLNGGAARHVQVGDIIIIAAFASMTEQEADSFKPKLVYVDGNNQISHTNDTIPTQAA</sequence>
<accession>B4SRY6</accession>
<keyword id="KW-0068">Autocatalytic cleavage</keyword>
<keyword id="KW-0963">Cytoplasm</keyword>
<keyword id="KW-0210">Decarboxylase</keyword>
<keyword id="KW-0456">Lyase</keyword>
<keyword id="KW-0566">Pantothenate biosynthesis</keyword>
<keyword id="KW-0670">Pyruvate</keyword>
<keyword id="KW-0704">Schiff base</keyword>
<keyword id="KW-0865">Zymogen</keyword>
<organism>
    <name type="scientific">Stenotrophomonas maltophilia (strain R551-3)</name>
    <dbReference type="NCBI Taxonomy" id="391008"/>
    <lineage>
        <taxon>Bacteria</taxon>
        <taxon>Pseudomonadati</taxon>
        <taxon>Pseudomonadota</taxon>
        <taxon>Gammaproteobacteria</taxon>
        <taxon>Lysobacterales</taxon>
        <taxon>Lysobacteraceae</taxon>
        <taxon>Stenotrophomonas</taxon>
        <taxon>Stenotrophomonas maltophilia group</taxon>
    </lineage>
</organism>
<comment type="function">
    <text evidence="1">Catalyzes the pyruvoyl-dependent decarboxylation of aspartate to produce beta-alanine.</text>
</comment>
<comment type="catalytic activity">
    <reaction evidence="1">
        <text>L-aspartate + H(+) = beta-alanine + CO2</text>
        <dbReference type="Rhea" id="RHEA:19497"/>
        <dbReference type="ChEBI" id="CHEBI:15378"/>
        <dbReference type="ChEBI" id="CHEBI:16526"/>
        <dbReference type="ChEBI" id="CHEBI:29991"/>
        <dbReference type="ChEBI" id="CHEBI:57966"/>
        <dbReference type="EC" id="4.1.1.11"/>
    </reaction>
</comment>
<comment type="cofactor">
    <cofactor evidence="1">
        <name>pyruvate</name>
        <dbReference type="ChEBI" id="CHEBI:15361"/>
    </cofactor>
    <text evidence="1">Binds 1 pyruvoyl group covalently per subunit.</text>
</comment>
<comment type="pathway">
    <text evidence="1">Cofactor biosynthesis; (R)-pantothenate biosynthesis; beta-alanine from L-aspartate: step 1/1.</text>
</comment>
<comment type="subunit">
    <text evidence="1">Heterooctamer of four alpha and four beta subunits.</text>
</comment>
<comment type="subcellular location">
    <subcellularLocation>
        <location evidence="1">Cytoplasm</location>
    </subcellularLocation>
</comment>
<comment type="PTM">
    <text evidence="1">Is synthesized initially as an inactive proenzyme, which is activated by self-cleavage at a specific serine bond to produce a beta-subunit with a hydroxyl group at its C-terminus and an alpha-subunit with a pyruvoyl group at its N-terminus.</text>
</comment>
<comment type="similarity">
    <text evidence="1">Belongs to the PanD family.</text>
</comment>
<reference key="1">
    <citation type="submission" date="2008-06" db="EMBL/GenBank/DDBJ databases">
        <title>Complete sequence of Stenotrophomonas maltophilia R551-3.</title>
        <authorList>
            <consortium name="US DOE Joint Genome Institute"/>
            <person name="Lucas S."/>
            <person name="Copeland A."/>
            <person name="Lapidus A."/>
            <person name="Glavina del Rio T."/>
            <person name="Dalin E."/>
            <person name="Tice H."/>
            <person name="Pitluck S."/>
            <person name="Chain P."/>
            <person name="Malfatti S."/>
            <person name="Shin M."/>
            <person name="Vergez L."/>
            <person name="Lang D."/>
            <person name="Schmutz J."/>
            <person name="Larimer F."/>
            <person name="Land M."/>
            <person name="Hauser L."/>
            <person name="Kyrpides N."/>
            <person name="Mikhailova N."/>
            <person name="Taghavi S."/>
            <person name="Monchy S."/>
            <person name="Newman L."/>
            <person name="Vangronsveld J."/>
            <person name="van der Lelie D."/>
            <person name="Richardson P."/>
        </authorList>
    </citation>
    <scope>NUCLEOTIDE SEQUENCE [LARGE SCALE GENOMIC DNA]</scope>
    <source>
        <strain>R551-3</strain>
    </source>
</reference>
<dbReference type="EC" id="4.1.1.11" evidence="1"/>
<dbReference type="EMBL" id="CP001111">
    <property type="protein sequence ID" value="ACF51225.1"/>
    <property type="molecule type" value="Genomic_DNA"/>
</dbReference>
<dbReference type="RefSeq" id="WP_004153087.1">
    <property type="nucleotide sequence ID" value="NC_011071.1"/>
</dbReference>
<dbReference type="SMR" id="B4SRY6"/>
<dbReference type="STRING" id="391008.Smal_1520"/>
<dbReference type="GeneID" id="64104215"/>
<dbReference type="KEGG" id="smt:Smal_1520"/>
<dbReference type="eggNOG" id="COG0853">
    <property type="taxonomic scope" value="Bacteria"/>
</dbReference>
<dbReference type="HOGENOM" id="CLU_115305_2_1_6"/>
<dbReference type="OrthoDB" id="9803983at2"/>
<dbReference type="UniPathway" id="UPA00028">
    <property type="reaction ID" value="UER00002"/>
</dbReference>
<dbReference type="Proteomes" id="UP000001867">
    <property type="component" value="Chromosome"/>
</dbReference>
<dbReference type="GO" id="GO:0005829">
    <property type="term" value="C:cytosol"/>
    <property type="evidence" value="ECO:0007669"/>
    <property type="project" value="TreeGrafter"/>
</dbReference>
<dbReference type="GO" id="GO:0004068">
    <property type="term" value="F:aspartate 1-decarboxylase activity"/>
    <property type="evidence" value="ECO:0007669"/>
    <property type="project" value="UniProtKB-UniRule"/>
</dbReference>
<dbReference type="GO" id="GO:0006523">
    <property type="term" value="P:alanine biosynthetic process"/>
    <property type="evidence" value="ECO:0007669"/>
    <property type="project" value="InterPro"/>
</dbReference>
<dbReference type="GO" id="GO:0015940">
    <property type="term" value="P:pantothenate biosynthetic process"/>
    <property type="evidence" value="ECO:0007669"/>
    <property type="project" value="UniProtKB-UniRule"/>
</dbReference>
<dbReference type="CDD" id="cd06919">
    <property type="entry name" value="Asp_decarbox"/>
    <property type="match status" value="1"/>
</dbReference>
<dbReference type="Gene3D" id="2.40.40.20">
    <property type="match status" value="1"/>
</dbReference>
<dbReference type="HAMAP" id="MF_00446">
    <property type="entry name" value="PanD"/>
    <property type="match status" value="1"/>
</dbReference>
<dbReference type="InterPro" id="IPR009010">
    <property type="entry name" value="Asp_de-COase-like_dom_sf"/>
</dbReference>
<dbReference type="InterPro" id="IPR003190">
    <property type="entry name" value="Asp_decarbox"/>
</dbReference>
<dbReference type="NCBIfam" id="TIGR00223">
    <property type="entry name" value="panD"/>
    <property type="match status" value="1"/>
</dbReference>
<dbReference type="PANTHER" id="PTHR21012">
    <property type="entry name" value="ASPARTATE 1-DECARBOXYLASE"/>
    <property type="match status" value="1"/>
</dbReference>
<dbReference type="PANTHER" id="PTHR21012:SF0">
    <property type="entry name" value="ASPARTATE 1-DECARBOXYLASE"/>
    <property type="match status" value="1"/>
</dbReference>
<dbReference type="Pfam" id="PF02261">
    <property type="entry name" value="Asp_decarbox"/>
    <property type="match status" value="1"/>
</dbReference>
<dbReference type="PIRSF" id="PIRSF006246">
    <property type="entry name" value="Asp_decarbox"/>
    <property type="match status" value="1"/>
</dbReference>
<dbReference type="SUPFAM" id="SSF50692">
    <property type="entry name" value="ADC-like"/>
    <property type="match status" value="1"/>
</dbReference>
<protein>
    <recommendedName>
        <fullName evidence="1">Aspartate 1-decarboxylase</fullName>
        <ecNumber evidence="1">4.1.1.11</ecNumber>
    </recommendedName>
    <alternativeName>
        <fullName evidence="1">Aspartate alpha-decarboxylase</fullName>
    </alternativeName>
    <component>
        <recommendedName>
            <fullName evidence="1">Aspartate 1-decarboxylase beta chain</fullName>
        </recommendedName>
    </component>
    <component>
        <recommendedName>
            <fullName evidence="1">Aspartate 1-decarboxylase alpha chain</fullName>
        </recommendedName>
    </component>
</protein>